<proteinExistence type="inferred from homology"/>
<protein>
    <recommendedName>
        <fullName evidence="1">Glutamyl-tRNA reductase</fullName>
        <shortName evidence="1">GluTR</shortName>
        <ecNumber evidence="1">1.2.1.70</ecNumber>
    </recommendedName>
</protein>
<dbReference type="EC" id="1.2.1.70" evidence="1"/>
<dbReference type="EMBL" id="CP000555">
    <property type="protein sequence ID" value="ABM93486.1"/>
    <property type="molecule type" value="Genomic_DNA"/>
</dbReference>
<dbReference type="RefSeq" id="WP_011828124.1">
    <property type="nucleotide sequence ID" value="NC_008825.1"/>
</dbReference>
<dbReference type="SMR" id="A2SD47"/>
<dbReference type="STRING" id="420662.Mpe_A0524"/>
<dbReference type="KEGG" id="mpt:Mpe_A0524"/>
<dbReference type="eggNOG" id="COG0373">
    <property type="taxonomic scope" value="Bacteria"/>
</dbReference>
<dbReference type="HOGENOM" id="CLU_035113_2_2_4"/>
<dbReference type="UniPathway" id="UPA00251">
    <property type="reaction ID" value="UER00316"/>
</dbReference>
<dbReference type="UniPathway" id="UPA00668"/>
<dbReference type="Proteomes" id="UP000000366">
    <property type="component" value="Chromosome"/>
</dbReference>
<dbReference type="GO" id="GO:0008883">
    <property type="term" value="F:glutamyl-tRNA reductase activity"/>
    <property type="evidence" value="ECO:0007669"/>
    <property type="project" value="UniProtKB-UniRule"/>
</dbReference>
<dbReference type="GO" id="GO:0050661">
    <property type="term" value="F:NADP binding"/>
    <property type="evidence" value="ECO:0007669"/>
    <property type="project" value="InterPro"/>
</dbReference>
<dbReference type="GO" id="GO:0015995">
    <property type="term" value="P:chlorophyll biosynthetic process"/>
    <property type="evidence" value="ECO:0007669"/>
    <property type="project" value="UniProtKB-UniRule"/>
</dbReference>
<dbReference type="GO" id="GO:0019353">
    <property type="term" value="P:protoporphyrinogen IX biosynthetic process from glutamate"/>
    <property type="evidence" value="ECO:0007669"/>
    <property type="project" value="TreeGrafter"/>
</dbReference>
<dbReference type="CDD" id="cd05213">
    <property type="entry name" value="NAD_bind_Glutamyl_tRNA_reduct"/>
    <property type="match status" value="1"/>
</dbReference>
<dbReference type="FunFam" id="3.30.460.30:FF:000001">
    <property type="entry name" value="Glutamyl-tRNA reductase"/>
    <property type="match status" value="1"/>
</dbReference>
<dbReference type="FunFam" id="3.40.50.720:FF:000031">
    <property type="entry name" value="Glutamyl-tRNA reductase"/>
    <property type="match status" value="1"/>
</dbReference>
<dbReference type="Gene3D" id="3.30.460.30">
    <property type="entry name" value="Glutamyl-tRNA reductase, N-terminal domain"/>
    <property type="match status" value="1"/>
</dbReference>
<dbReference type="Gene3D" id="3.40.50.720">
    <property type="entry name" value="NAD(P)-binding Rossmann-like Domain"/>
    <property type="match status" value="1"/>
</dbReference>
<dbReference type="HAMAP" id="MF_00087">
    <property type="entry name" value="Glu_tRNA_reductase"/>
    <property type="match status" value="1"/>
</dbReference>
<dbReference type="InterPro" id="IPR000343">
    <property type="entry name" value="4pyrrol_synth_GluRdtase"/>
</dbReference>
<dbReference type="InterPro" id="IPR015896">
    <property type="entry name" value="4pyrrol_synth_GluRdtase_dimer"/>
</dbReference>
<dbReference type="InterPro" id="IPR015895">
    <property type="entry name" value="4pyrrol_synth_GluRdtase_N"/>
</dbReference>
<dbReference type="InterPro" id="IPR018214">
    <property type="entry name" value="GluRdtase_CS"/>
</dbReference>
<dbReference type="InterPro" id="IPR036453">
    <property type="entry name" value="GluRdtase_dimer_dom_sf"/>
</dbReference>
<dbReference type="InterPro" id="IPR036343">
    <property type="entry name" value="GluRdtase_N_sf"/>
</dbReference>
<dbReference type="InterPro" id="IPR036291">
    <property type="entry name" value="NAD(P)-bd_dom_sf"/>
</dbReference>
<dbReference type="InterPro" id="IPR006151">
    <property type="entry name" value="Shikm_DH/Glu-tRNA_Rdtase"/>
</dbReference>
<dbReference type="NCBIfam" id="TIGR01035">
    <property type="entry name" value="hemA"/>
    <property type="match status" value="1"/>
</dbReference>
<dbReference type="PANTHER" id="PTHR43013">
    <property type="entry name" value="GLUTAMYL-TRNA REDUCTASE"/>
    <property type="match status" value="1"/>
</dbReference>
<dbReference type="PANTHER" id="PTHR43013:SF1">
    <property type="entry name" value="GLUTAMYL-TRNA REDUCTASE"/>
    <property type="match status" value="1"/>
</dbReference>
<dbReference type="Pfam" id="PF00745">
    <property type="entry name" value="GlutR_dimer"/>
    <property type="match status" value="1"/>
</dbReference>
<dbReference type="Pfam" id="PF05201">
    <property type="entry name" value="GlutR_N"/>
    <property type="match status" value="1"/>
</dbReference>
<dbReference type="Pfam" id="PF01488">
    <property type="entry name" value="Shikimate_DH"/>
    <property type="match status" value="1"/>
</dbReference>
<dbReference type="PIRSF" id="PIRSF000445">
    <property type="entry name" value="4pyrrol_synth_GluRdtase"/>
    <property type="match status" value="1"/>
</dbReference>
<dbReference type="SUPFAM" id="SSF69742">
    <property type="entry name" value="Glutamyl tRNA-reductase catalytic, N-terminal domain"/>
    <property type="match status" value="1"/>
</dbReference>
<dbReference type="SUPFAM" id="SSF69075">
    <property type="entry name" value="Glutamyl tRNA-reductase dimerization domain"/>
    <property type="match status" value="1"/>
</dbReference>
<dbReference type="SUPFAM" id="SSF51735">
    <property type="entry name" value="NAD(P)-binding Rossmann-fold domains"/>
    <property type="match status" value="1"/>
</dbReference>
<dbReference type="PROSITE" id="PS00747">
    <property type="entry name" value="GLUTR"/>
    <property type="match status" value="1"/>
</dbReference>
<keyword id="KW-0149">Chlorophyll biosynthesis</keyword>
<keyword id="KW-0521">NADP</keyword>
<keyword id="KW-0560">Oxidoreductase</keyword>
<keyword id="KW-0627">Porphyrin biosynthesis</keyword>
<keyword id="KW-1185">Reference proteome</keyword>
<accession>A2SD47</accession>
<reference key="1">
    <citation type="journal article" date="2007" name="J. Bacteriol.">
        <title>Whole-genome analysis of the methyl tert-butyl ether-degrading beta-proteobacterium Methylibium petroleiphilum PM1.</title>
        <authorList>
            <person name="Kane S.R."/>
            <person name="Chakicherla A.Y."/>
            <person name="Chain P.S.G."/>
            <person name="Schmidt R."/>
            <person name="Shin M.W."/>
            <person name="Legler T.C."/>
            <person name="Scow K.M."/>
            <person name="Larimer F.W."/>
            <person name="Lucas S.M."/>
            <person name="Richardson P.M."/>
            <person name="Hristova K.R."/>
        </authorList>
    </citation>
    <scope>NUCLEOTIDE SEQUENCE [LARGE SCALE GENOMIC DNA]</scope>
    <source>
        <strain>ATCC BAA-1232 / LMG 22953 / PM1</strain>
    </source>
</reference>
<sequence>MSVFALGLNHTTAPVDLRGRFAFTLEQLAPTLQGFRERLTTGQRPGTPEAAILSTCNRTELYCAAEPQLVRPALEWLAGVGGVGADTLSHHAYMLEGGEAARHAFRVASGLDSMVLGEPQILGQMKQAVREADAAGTLGSTLHQLFQRSFAVAKEVRTATEIGTHSISMAAAAVRLAAQLFEDLREIRVLFVGAGEMIELAATHFSARAPARMAVANRTLERGERLASRFGAESIRLSDLPQRLHEFDAVVSCTASSLPLIGLGAVERALKVRRHRPIFMVDLAVPRDIEPEVARLDDVYLYTVDDLSAIVQSGGEKRLAAVAQAEAIIETGVQSFVHWLGQRGTVPLIQALNAQADSWRENELVRARKLLARGESVDAVLDALSRGLTQKMLHGTLAELHASDPAQRAQLATTVSRLFLRGAIPPDAVRPSGPREDDHLDGV</sequence>
<organism>
    <name type="scientific">Methylibium petroleiphilum (strain ATCC BAA-1232 / LMG 22953 / PM1)</name>
    <dbReference type="NCBI Taxonomy" id="420662"/>
    <lineage>
        <taxon>Bacteria</taxon>
        <taxon>Pseudomonadati</taxon>
        <taxon>Pseudomonadota</taxon>
        <taxon>Betaproteobacteria</taxon>
        <taxon>Burkholderiales</taxon>
        <taxon>Sphaerotilaceae</taxon>
        <taxon>Methylibium</taxon>
    </lineage>
</organism>
<feature type="chain" id="PRO_1000004641" description="Glutamyl-tRNA reductase">
    <location>
        <begin position="1"/>
        <end position="443"/>
    </location>
</feature>
<feature type="active site" description="Nucleophile" evidence="1">
    <location>
        <position position="56"/>
    </location>
</feature>
<feature type="binding site" evidence="1">
    <location>
        <begin position="55"/>
        <end position="58"/>
    </location>
    <ligand>
        <name>substrate</name>
    </ligand>
</feature>
<feature type="binding site" evidence="1">
    <location>
        <position position="113"/>
    </location>
    <ligand>
        <name>substrate</name>
    </ligand>
</feature>
<feature type="binding site" evidence="1">
    <location>
        <begin position="118"/>
        <end position="120"/>
    </location>
    <ligand>
        <name>substrate</name>
    </ligand>
</feature>
<feature type="binding site" evidence="1">
    <location>
        <position position="124"/>
    </location>
    <ligand>
        <name>substrate</name>
    </ligand>
</feature>
<feature type="binding site" evidence="1">
    <location>
        <begin position="193"/>
        <end position="198"/>
    </location>
    <ligand>
        <name>NADP(+)</name>
        <dbReference type="ChEBI" id="CHEBI:58349"/>
    </ligand>
</feature>
<feature type="site" description="Important for activity" evidence="1">
    <location>
        <position position="103"/>
    </location>
</feature>
<gene>
    <name evidence="1" type="primary">hemA</name>
    <name type="ordered locus">Mpe_A0524</name>
</gene>
<comment type="function">
    <text evidence="1">Catalyzes the NADPH-dependent reduction of glutamyl-tRNA(Glu) to glutamate 1-semialdehyde (GSA).</text>
</comment>
<comment type="catalytic activity">
    <reaction evidence="1">
        <text>(S)-4-amino-5-oxopentanoate + tRNA(Glu) + NADP(+) = L-glutamyl-tRNA(Glu) + NADPH + H(+)</text>
        <dbReference type="Rhea" id="RHEA:12344"/>
        <dbReference type="Rhea" id="RHEA-COMP:9663"/>
        <dbReference type="Rhea" id="RHEA-COMP:9680"/>
        <dbReference type="ChEBI" id="CHEBI:15378"/>
        <dbReference type="ChEBI" id="CHEBI:57501"/>
        <dbReference type="ChEBI" id="CHEBI:57783"/>
        <dbReference type="ChEBI" id="CHEBI:58349"/>
        <dbReference type="ChEBI" id="CHEBI:78442"/>
        <dbReference type="ChEBI" id="CHEBI:78520"/>
        <dbReference type="EC" id="1.2.1.70"/>
    </reaction>
</comment>
<comment type="pathway">
    <text evidence="1">Porphyrin-containing compound metabolism; protoporphyrin-IX biosynthesis; 5-aminolevulinate from L-glutamyl-tRNA(Glu): step 1/2.</text>
</comment>
<comment type="pathway">
    <text evidence="1">Porphyrin-containing compound metabolism; chlorophyll biosynthesis.</text>
</comment>
<comment type="subunit">
    <text evidence="1">Homodimer.</text>
</comment>
<comment type="domain">
    <text evidence="1">Possesses an unusual extended V-shaped dimeric structure with each monomer consisting of three distinct domains arranged along a curved 'spinal' alpha-helix. The N-terminal catalytic domain specifically recognizes the glutamate moiety of the substrate. The second domain is the NADPH-binding domain, and the third C-terminal domain is responsible for dimerization.</text>
</comment>
<comment type="miscellaneous">
    <text evidence="1">During catalysis, the active site Cys acts as a nucleophile attacking the alpha-carbonyl group of tRNA-bound glutamate with the formation of a thioester intermediate between enzyme and glutamate, and the concomitant release of tRNA(Glu). The thioester intermediate is finally reduced by direct hydride transfer from NADPH, to form the product GSA.</text>
</comment>
<comment type="similarity">
    <text evidence="1">Belongs to the glutamyl-tRNA reductase family.</text>
</comment>
<evidence type="ECO:0000255" key="1">
    <source>
        <dbReference type="HAMAP-Rule" id="MF_00087"/>
    </source>
</evidence>
<name>HEM1_METPP</name>